<sequence length="534" mass="55512">MNCSPPGSSTDTERQSSSSGTPATPCPTLAPTHPVRQANRLPIRLINMLTAHTGHLLHPEYLQPLSSTPISPIELDAKKSPLALLAQTCSQIGKPDPPPSSKLNSVTSSEKESGRSSSLKLGESPLEDKSSFKPYSKGGETRKESGSSAGGSADKAGFRVPSGSCQPFPHAPSPSSRVSSPGQHCDSKNNESQEKKEPEANKGSLETSQANPTLTRASISNSSAESSQSGDVTPSSKSDPPSLGSGHVAPVSPYKPGHSVFPLPPSGIGYHGSIVGAYAGYPSQYVHGLDHTKTSLVGNQLPGTLGLPGKPPSSSPLTGASPPSFMQGLCRDPYCLSYHNASHLGSSSCSTCVHDPSALKSGYPLVYPSHPLHSVHTTMSSSVTPSLSGHPLYTYGFMLQNDPVPHICNWVSASGPCDKRFATSEELLAHLRTHTALPGADKLLAGYPTSSFGSAASCHLHLPPGGPGSPTTLPGSLSLRSPHTLGLSRYHPYGKGHLTTPSGLPVPSLPAGSYYSPYALYGQRLTSASALGYQ</sequence>
<comment type="function">
    <text evidence="1 4">Transcriptional corepressor which does not bind directly to DNA and may regulate transcription through recruitment of histone deacetylases to gene promoters (By similarity). Regulates cell adhesion, migration and proliferation (By similarity). Involved in specification of the lateral neural plate border (NPB) (PubMed:28716930). May be required for segmental gene expression during hindbrain development (By similarity).</text>
</comment>
<comment type="subcellular location">
    <subcellularLocation>
        <location evidence="1">Nucleus</location>
    </subcellularLocation>
    <subcellularLocation>
        <location evidence="1">Cytoplasm</location>
    </subcellularLocation>
</comment>
<comment type="developmental stage">
    <text evidence="4">Expressed at the posterior ectoderm except for the dorsal midline in gastrulae (PubMed:28716930). During neurulation, expression diminishes so as to become restricted to the lateral neural plate border (NPB) and neural crest (PubMed:28716930).</text>
</comment>
<comment type="disruption phenotype">
    <text evidence="4">Morpholino knockdown blocks differentiation of the neural plate border (NPB).</text>
</comment>
<comment type="similarity">
    <text evidence="5">Belongs to the Elbow/Noc family.</text>
</comment>
<comment type="sequence caution" evidence="5">
    <conflict type="erroneous initiation">
        <sequence resource="EMBL-CDS" id="AAH46863"/>
    </conflict>
    <text>Extended N-terminus.</text>
</comment>
<feature type="chain" id="PRO_0000292209" description="Zinc finger protein 703-A">
    <location>
        <begin position="1"/>
        <end position="534"/>
    </location>
</feature>
<feature type="zinc finger region" description="C2H2-type" evidence="2">
    <location>
        <begin position="406"/>
        <end position="434"/>
    </location>
</feature>
<feature type="region of interest" description="Disordered" evidence="3">
    <location>
        <begin position="1"/>
        <end position="35"/>
    </location>
</feature>
<feature type="region of interest" description="Disordered" evidence="3">
    <location>
        <begin position="90"/>
        <end position="251"/>
    </location>
</feature>
<feature type="region of interest" description="Disordered" evidence="3">
    <location>
        <begin position="300"/>
        <end position="320"/>
    </location>
</feature>
<feature type="compositionally biased region" description="Low complexity" evidence="3">
    <location>
        <begin position="15"/>
        <end position="34"/>
    </location>
</feature>
<feature type="compositionally biased region" description="Low complexity" evidence="3">
    <location>
        <begin position="115"/>
        <end position="124"/>
    </location>
</feature>
<feature type="compositionally biased region" description="Low complexity" evidence="3">
    <location>
        <begin position="146"/>
        <end position="155"/>
    </location>
</feature>
<feature type="compositionally biased region" description="Polar residues" evidence="3">
    <location>
        <begin position="173"/>
        <end position="182"/>
    </location>
</feature>
<feature type="compositionally biased region" description="Basic and acidic residues" evidence="3">
    <location>
        <begin position="185"/>
        <end position="200"/>
    </location>
</feature>
<feature type="compositionally biased region" description="Polar residues" evidence="3">
    <location>
        <begin position="204"/>
        <end position="217"/>
    </location>
</feature>
<feature type="compositionally biased region" description="Low complexity" evidence="3">
    <location>
        <begin position="218"/>
        <end position="229"/>
    </location>
</feature>
<feature type="compositionally biased region" description="Polar residues" evidence="3">
    <location>
        <begin position="230"/>
        <end position="239"/>
    </location>
</feature>
<proteinExistence type="evidence at transcript level"/>
<accession>Q7ZWN6</accession>
<reference key="1">
    <citation type="submission" date="2003-02" db="EMBL/GenBank/DDBJ databases">
        <authorList>
            <consortium name="NIH - Xenopus Gene Collection (XGC) project"/>
        </authorList>
    </citation>
    <scope>NUCLEOTIDE SEQUENCE [LARGE SCALE MRNA]</scope>
    <source>
        <tissue>Embryo</tissue>
    </source>
</reference>
<reference key="2">
    <citation type="journal article" date="2017" name="Proc. Natl. Acad. Sci. U.S.A.">
        <title>Conserved gene regulatory module specifies lateral neural borders across bilaterians.</title>
        <authorList>
            <person name="Li Y."/>
            <person name="Zhao D."/>
            <person name="Horie T."/>
            <person name="Chen G."/>
            <person name="Bao H."/>
            <person name="Chen S."/>
            <person name="Liu W."/>
            <person name="Horie R."/>
            <person name="Liang T."/>
            <person name="Dong B."/>
            <person name="Feng Q."/>
            <person name="Tao Q."/>
            <person name="Liu X."/>
        </authorList>
    </citation>
    <scope>FUNCTION</scope>
    <scope>DEVELOPMENTAL STAGE</scope>
    <scope>DISRUPTION PHENOTYPE</scope>
</reference>
<dbReference type="EMBL" id="BC046863">
    <property type="protein sequence ID" value="AAH46863.1"/>
    <property type="status" value="ALT_INIT"/>
    <property type="molecule type" value="mRNA"/>
</dbReference>
<dbReference type="GeneID" id="398562"/>
<dbReference type="KEGG" id="xla:398562"/>
<dbReference type="AGR" id="Xenbase:XB-GENE-6256038"/>
<dbReference type="CTD" id="398562"/>
<dbReference type="Xenbase" id="XB-GENE-6256038">
    <property type="gene designation" value="znf703.L"/>
</dbReference>
<dbReference type="OMA" id="LMYPSPH"/>
<dbReference type="OrthoDB" id="10054079at2759"/>
<dbReference type="Proteomes" id="UP000186698">
    <property type="component" value="Chromosome 3L"/>
</dbReference>
<dbReference type="Bgee" id="398562">
    <property type="expression patterns" value="Expressed in neurula embryo and 19 other cell types or tissues"/>
</dbReference>
<dbReference type="GO" id="GO:0005737">
    <property type="term" value="C:cytoplasm"/>
    <property type="evidence" value="ECO:0000250"/>
    <property type="project" value="UniProtKB"/>
</dbReference>
<dbReference type="GO" id="GO:0016363">
    <property type="term" value="C:nuclear matrix"/>
    <property type="evidence" value="ECO:0000250"/>
    <property type="project" value="UniProtKB"/>
</dbReference>
<dbReference type="GO" id="GO:0005634">
    <property type="term" value="C:nucleus"/>
    <property type="evidence" value="ECO:0000250"/>
    <property type="project" value="UniProtKB"/>
</dbReference>
<dbReference type="GO" id="GO:0008270">
    <property type="term" value="F:zinc ion binding"/>
    <property type="evidence" value="ECO:0007669"/>
    <property type="project" value="UniProtKB-KW"/>
</dbReference>
<dbReference type="GO" id="GO:0034333">
    <property type="term" value="P:adherens junction assembly"/>
    <property type="evidence" value="ECO:0000250"/>
    <property type="project" value="UniProtKB"/>
</dbReference>
<dbReference type="GO" id="GO:0045892">
    <property type="term" value="P:negative regulation of DNA-templated transcription"/>
    <property type="evidence" value="ECO:0000250"/>
    <property type="project" value="UniProtKB"/>
</dbReference>
<dbReference type="GO" id="GO:0034111">
    <property type="term" value="P:negative regulation of homotypic cell-cell adhesion"/>
    <property type="evidence" value="ECO:0000250"/>
    <property type="project" value="UniProtKB"/>
</dbReference>
<dbReference type="GO" id="GO:0030335">
    <property type="term" value="P:positive regulation of cell migration"/>
    <property type="evidence" value="ECO:0000250"/>
    <property type="project" value="UniProtKB"/>
</dbReference>
<dbReference type="GO" id="GO:0060828">
    <property type="term" value="P:regulation of canonical Wnt signaling pathway"/>
    <property type="evidence" value="ECO:0000250"/>
    <property type="project" value="UniProtKB"/>
</dbReference>
<dbReference type="GO" id="GO:0051726">
    <property type="term" value="P:regulation of cell cycle"/>
    <property type="evidence" value="ECO:0000250"/>
    <property type="project" value="UniProtKB"/>
</dbReference>
<dbReference type="GO" id="GO:0017015">
    <property type="term" value="P:regulation of transforming growth factor beta receptor signaling pathway"/>
    <property type="evidence" value="ECO:0000250"/>
    <property type="project" value="UniProtKB"/>
</dbReference>
<dbReference type="FunFam" id="3.30.160.60:FF:000129">
    <property type="entry name" value="Zinc finger protein 503"/>
    <property type="match status" value="1"/>
</dbReference>
<dbReference type="Gene3D" id="3.30.160.60">
    <property type="entry name" value="Classic Zinc Finger"/>
    <property type="match status" value="1"/>
</dbReference>
<dbReference type="InterPro" id="IPR051520">
    <property type="entry name" value="Elbow/Noc_ZnFinger"/>
</dbReference>
<dbReference type="InterPro" id="IPR022129">
    <property type="entry name" value="Tscrpt_rep_NocA-like"/>
</dbReference>
<dbReference type="InterPro" id="IPR013087">
    <property type="entry name" value="Znf_C2H2_type"/>
</dbReference>
<dbReference type="PANTHER" id="PTHR12522:SF2">
    <property type="entry name" value="ZINC FINGER PROTEIN 703"/>
    <property type="match status" value="1"/>
</dbReference>
<dbReference type="PANTHER" id="PTHR12522">
    <property type="entry name" value="ZINC-FINGER PROTEIN NOLZ1-RELATED"/>
    <property type="match status" value="1"/>
</dbReference>
<dbReference type="Pfam" id="PF12402">
    <property type="entry name" value="nlz1"/>
    <property type="match status" value="1"/>
</dbReference>
<dbReference type="PROSITE" id="PS50157">
    <property type="entry name" value="ZINC_FINGER_C2H2_2"/>
    <property type="match status" value="1"/>
</dbReference>
<protein>
    <recommendedName>
        <fullName>Zinc finger protein 703-A</fullName>
    </recommendedName>
</protein>
<keyword id="KW-0963">Cytoplasm</keyword>
<keyword id="KW-0217">Developmental protein</keyword>
<keyword id="KW-0479">Metal-binding</keyword>
<keyword id="KW-0539">Nucleus</keyword>
<keyword id="KW-1185">Reference proteome</keyword>
<keyword id="KW-0678">Repressor</keyword>
<keyword id="KW-0804">Transcription</keyword>
<keyword id="KW-0805">Transcription regulation</keyword>
<keyword id="KW-0862">Zinc</keyword>
<keyword id="KW-0863">Zinc-finger</keyword>
<organism>
    <name type="scientific">Xenopus laevis</name>
    <name type="common">African clawed frog</name>
    <dbReference type="NCBI Taxonomy" id="8355"/>
    <lineage>
        <taxon>Eukaryota</taxon>
        <taxon>Metazoa</taxon>
        <taxon>Chordata</taxon>
        <taxon>Craniata</taxon>
        <taxon>Vertebrata</taxon>
        <taxon>Euteleostomi</taxon>
        <taxon>Amphibia</taxon>
        <taxon>Batrachia</taxon>
        <taxon>Anura</taxon>
        <taxon>Pipoidea</taxon>
        <taxon>Pipidae</taxon>
        <taxon>Xenopodinae</taxon>
        <taxon>Xenopus</taxon>
        <taxon>Xenopus</taxon>
    </lineage>
</organism>
<gene>
    <name type="primary">znf703-a</name>
</gene>
<name>Z703A_XENLA</name>
<evidence type="ECO:0000250" key="1">
    <source>
        <dbReference type="UniProtKB" id="Q9H7S9"/>
    </source>
</evidence>
<evidence type="ECO:0000255" key="2">
    <source>
        <dbReference type="PROSITE-ProRule" id="PRU00042"/>
    </source>
</evidence>
<evidence type="ECO:0000256" key="3">
    <source>
        <dbReference type="SAM" id="MobiDB-lite"/>
    </source>
</evidence>
<evidence type="ECO:0000269" key="4">
    <source>
    </source>
</evidence>
<evidence type="ECO:0000305" key="5"/>